<protein>
    <recommendedName>
        <fullName evidence="1">Oligoribonuclease</fullName>
        <ecNumber evidence="1">3.1.15.-</ecNumber>
    </recommendedName>
</protein>
<feature type="chain" id="PRO_1000004300" description="Oligoribonuclease">
    <location>
        <begin position="1"/>
        <end position="181"/>
    </location>
</feature>
<feature type="domain" description="Exonuclease" evidence="1">
    <location>
        <begin position="8"/>
        <end position="171"/>
    </location>
</feature>
<feature type="active site" evidence="1">
    <location>
        <position position="129"/>
    </location>
</feature>
<sequence length="181" mass="20958">MAENQNNLIWIDLEMTGLDPERDRIIEIATLVTDANLNILAEGPVLAVHQSDEQLGLMDEWNVRTHTGSGLVERVKASPFNDHDAELQTIEFLKQWVPAGTSPICGNSVGQDRRFLFRYMPELEAYFHYRYLDVSTLKELARRWKPEILAGFKKQNTHQALDDIRESVAELAYYREHFIQK</sequence>
<reference key="1">
    <citation type="journal article" date="2006" name="PLoS Genet.">
        <title>The complete genome sequence and comparative genome analysis of the high pathogenicity Yersinia enterocolitica strain 8081.</title>
        <authorList>
            <person name="Thomson N.R."/>
            <person name="Howard S."/>
            <person name="Wren B.W."/>
            <person name="Holden M.T.G."/>
            <person name="Crossman L."/>
            <person name="Challis G.L."/>
            <person name="Churcher C."/>
            <person name="Mungall K."/>
            <person name="Brooks K."/>
            <person name="Chillingworth T."/>
            <person name="Feltwell T."/>
            <person name="Abdellah Z."/>
            <person name="Hauser H."/>
            <person name="Jagels K."/>
            <person name="Maddison M."/>
            <person name="Moule S."/>
            <person name="Sanders M."/>
            <person name="Whitehead S."/>
            <person name="Quail M.A."/>
            <person name="Dougan G."/>
            <person name="Parkhill J."/>
            <person name="Prentice M.B."/>
        </authorList>
    </citation>
    <scope>NUCLEOTIDE SEQUENCE [LARGE SCALE GENOMIC DNA]</scope>
    <source>
        <strain>NCTC 13174 / 8081</strain>
    </source>
</reference>
<name>ORN_YERE8</name>
<proteinExistence type="inferred from homology"/>
<gene>
    <name evidence="1" type="primary">orn</name>
    <name type="ordered locus">YE0369</name>
</gene>
<organism>
    <name type="scientific">Yersinia enterocolitica serotype O:8 / biotype 1B (strain NCTC 13174 / 8081)</name>
    <dbReference type="NCBI Taxonomy" id="393305"/>
    <lineage>
        <taxon>Bacteria</taxon>
        <taxon>Pseudomonadati</taxon>
        <taxon>Pseudomonadota</taxon>
        <taxon>Gammaproteobacteria</taxon>
        <taxon>Enterobacterales</taxon>
        <taxon>Yersiniaceae</taxon>
        <taxon>Yersinia</taxon>
    </lineage>
</organism>
<comment type="function">
    <text evidence="1">3'-to-5' exoribonuclease specific for small oligoribonucleotides.</text>
</comment>
<comment type="subcellular location">
    <subcellularLocation>
        <location evidence="1">Cytoplasm</location>
    </subcellularLocation>
</comment>
<comment type="similarity">
    <text evidence="1">Belongs to the oligoribonuclease family.</text>
</comment>
<dbReference type="EC" id="3.1.15.-" evidence="1"/>
<dbReference type="EMBL" id="AM286415">
    <property type="protein sequence ID" value="CAL10499.1"/>
    <property type="molecule type" value="Genomic_DNA"/>
</dbReference>
<dbReference type="RefSeq" id="WP_011815420.1">
    <property type="nucleotide sequence ID" value="NC_008800.1"/>
</dbReference>
<dbReference type="RefSeq" id="YP_001004745.1">
    <property type="nucleotide sequence ID" value="NC_008800.1"/>
</dbReference>
<dbReference type="SMR" id="A1JIQ8"/>
<dbReference type="GeneID" id="93968849"/>
<dbReference type="KEGG" id="yen:YE0369"/>
<dbReference type="PATRIC" id="fig|393305.7.peg.466"/>
<dbReference type="eggNOG" id="COG1949">
    <property type="taxonomic scope" value="Bacteria"/>
</dbReference>
<dbReference type="HOGENOM" id="CLU_064761_2_0_6"/>
<dbReference type="OrthoDB" id="9801329at2"/>
<dbReference type="Proteomes" id="UP000000642">
    <property type="component" value="Chromosome"/>
</dbReference>
<dbReference type="GO" id="GO:0005737">
    <property type="term" value="C:cytoplasm"/>
    <property type="evidence" value="ECO:0007669"/>
    <property type="project" value="UniProtKB-SubCell"/>
</dbReference>
<dbReference type="GO" id="GO:0000175">
    <property type="term" value="F:3'-5'-RNA exonuclease activity"/>
    <property type="evidence" value="ECO:0007669"/>
    <property type="project" value="InterPro"/>
</dbReference>
<dbReference type="GO" id="GO:0003676">
    <property type="term" value="F:nucleic acid binding"/>
    <property type="evidence" value="ECO:0007669"/>
    <property type="project" value="InterPro"/>
</dbReference>
<dbReference type="GO" id="GO:0006259">
    <property type="term" value="P:DNA metabolic process"/>
    <property type="evidence" value="ECO:0007669"/>
    <property type="project" value="UniProtKB-ARBA"/>
</dbReference>
<dbReference type="CDD" id="cd06135">
    <property type="entry name" value="Orn"/>
    <property type="match status" value="1"/>
</dbReference>
<dbReference type="FunFam" id="3.30.420.10:FF:000003">
    <property type="entry name" value="Oligoribonuclease"/>
    <property type="match status" value="1"/>
</dbReference>
<dbReference type="Gene3D" id="3.30.420.10">
    <property type="entry name" value="Ribonuclease H-like superfamily/Ribonuclease H"/>
    <property type="match status" value="1"/>
</dbReference>
<dbReference type="HAMAP" id="MF_00045">
    <property type="entry name" value="Oligoribonuclease"/>
    <property type="match status" value="1"/>
</dbReference>
<dbReference type="InterPro" id="IPR013520">
    <property type="entry name" value="Exonuclease_RNaseT/DNA_pol3"/>
</dbReference>
<dbReference type="InterPro" id="IPR022894">
    <property type="entry name" value="Oligoribonuclease"/>
</dbReference>
<dbReference type="InterPro" id="IPR012337">
    <property type="entry name" value="RNaseH-like_sf"/>
</dbReference>
<dbReference type="InterPro" id="IPR036397">
    <property type="entry name" value="RNaseH_sf"/>
</dbReference>
<dbReference type="NCBIfam" id="NF003765">
    <property type="entry name" value="PRK05359.1"/>
    <property type="match status" value="1"/>
</dbReference>
<dbReference type="PANTHER" id="PTHR11046">
    <property type="entry name" value="OLIGORIBONUCLEASE, MITOCHONDRIAL"/>
    <property type="match status" value="1"/>
</dbReference>
<dbReference type="PANTHER" id="PTHR11046:SF0">
    <property type="entry name" value="OLIGORIBONUCLEASE, MITOCHONDRIAL"/>
    <property type="match status" value="1"/>
</dbReference>
<dbReference type="Pfam" id="PF00929">
    <property type="entry name" value="RNase_T"/>
    <property type="match status" value="1"/>
</dbReference>
<dbReference type="SMART" id="SM00479">
    <property type="entry name" value="EXOIII"/>
    <property type="match status" value="1"/>
</dbReference>
<dbReference type="SUPFAM" id="SSF53098">
    <property type="entry name" value="Ribonuclease H-like"/>
    <property type="match status" value="1"/>
</dbReference>
<evidence type="ECO:0000255" key="1">
    <source>
        <dbReference type="HAMAP-Rule" id="MF_00045"/>
    </source>
</evidence>
<keyword id="KW-0963">Cytoplasm</keyword>
<keyword id="KW-0269">Exonuclease</keyword>
<keyword id="KW-0378">Hydrolase</keyword>
<keyword id="KW-0540">Nuclease</keyword>
<accession>A1JIQ8</accession>